<evidence type="ECO:0000255" key="1"/>
<evidence type="ECO:0000305" key="2"/>
<proteinExistence type="inferred from homology"/>
<keyword id="KW-0997">Cell inner membrane</keyword>
<keyword id="KW-1003">Cell membrane</keyword>
<keyword id="KW-0472">Membrane</keyword>
<keyword id="KW-1185">Reference proteome</keyword>
<keyword id="KW-0812">Transmembrane</keyword>
<keyword id="KW-1133">Transmembrane helix</keyword>
<keyword id="KW-0813">Transport</keyword>
<sequence>MPMISILCSLFPPLLFPSLLAAFGASIAAGIIGSYIVVKRIVSISGSIAHSILGGVGIALWLQYQFNLPISPLHGAIASAIFVAICIGNVHLKYHEREDSIISMIWSIGMAIGIICISKLPSFNSELSDFLFGNILWVTPQDLYFLGILDLFIVATVSICHTRFLALCFDEKYMALNHYSIKTWYLLLLILTAITTVVLMYVMGVILMLSMLVLPVSIACRFSYKMSHIIYIASILNIVCSFLGIMLAYLLDLPVGPVIAILMGGAYSLSLLLKRSYNASTPSPVSPESKINS</sequence>
<accession>O84422</accession>
<organism>
    <name type="scientific">Chlamydia trachomatis serovar D (strain ATCC VR-885 / DSM 19411 / UW-3/Cx)</name>
    <dbReference type="NCBI Taxonomy" id="272561"/>
    <lineage>
        <taxon>Bacteria</taxon>
        <taxon>Pseudomonadati</taxon>
        <taxon>Chlamydiota</taxon>
        <taxon>Chlamydiia</taxon>
        <taxon>Chlamydiales</taxon>
        <taxon>Chlamydiaceae</taxon>
        <taxon>Chlamydia/Chlamydophila group</taxon>
        <taxon>Chlamydia</taxon>
    </lineage>
</organism>
<gene>
    <name type="ordered locus">CT_417</name>
</gene>
<comment type="function">
    <text>Part of an ATP-driven transport system CT_415/CT_416/CT_417 for a metal.</text>
</comment>
<comment type="subcellular location">
    <subcellularLocation>
        <location evidence="2">Cell inner membrane</location>
        <topology evidence="2">Multi-pass membrane protein</topology>
    </subcellularLocation>
</comment>
<comment type="similarity">
    <text evidence="2">Belongs to the ABC-3 integral membrane protein family.</text>
</comment>
<feature type="chain" id="PRO_0000171171" description="Probable metal transport system membrane protein CT_417">
    <location>
        <begin position="1"/>
        <end position="293"/>
    </location>
</feature>
<feature type="transmembrane region" description="Helical" evidence="1">
    <location>
        <begin position="18"/>
        <end position="38"/>
    </location>
</feature>
<feature type="transmembrane region" description="Helical" evidence="1">
    <location>
        <begin position="41"/>
        <end position="61"/>
    </location>
</feature>
<feature type="transmembrane region" description="Helical" evidence="1">
    <location>
        <begin position="68"/>
        <end position="88"/>
    </location>
</feature>
<feature type="transmembrane region" description="Helical" evidence="1">
    <location>
        <begin position="101"/>
        <end position="121"/>
    </location>
</feature>
<feature type="transmembrane region" description="Helical" evidence="1">
    <location>
        <begin position="135"/>
        <end position="155"/>
    </location>
</feature>
<feature type="transmembrane region" description="Helical" evidence="1">
    <location>
        <begin position="187"/>
        <end position="207"/>
    </location>
</feature>
<feature type="transmembrane region" description="Helical" evidence="1">
    <location>
        <begin position="242"/>
        <end position="262"/>
    </location>
</feature>
<dbReference type="EMBL" id="AE001273">
    <property type="protein sequence ID" value="AAC68014.1"/>
    <property type="molecule type" value="Genomic_DNA"/>
</dbReference>
<dbReference type="PIR" id="D71517">
    <property type="entry name" value="D71517"/>
</dbReference>
<dbReference type="RefSeq" id="NP_219927.1">
    <property type="nucleotide sequence ID" value="NC_000117.1"/>
</dbReference>
<dbReference type="RefSeq" id="WP_010725195.1">
    <property type="nucleotide sequence ID" value="NC_000117.1"/>
</dbReference>
<dbReference type="SMR" id="O84422"/>
<dbReference type="FunCoup" id="O84422">
    <property type="interactions" value="50"/>
</dbReference>
<dbReference type="STRING" id="272561.CT_417"/>
<dbReference type="EnsemblBacteria" id="AAC68014">
    <property type="protein sequence ID" value="AAC68014"/>
    <property type="gene ID" value="CT_417"/>
</dbReference>
<dbReference type="GeneID" id="884697"/>
<dbReference type="KEGG" id="ctr:CT_417"/>
<dbReference type="PATRIC" id="fig|272561.5.peg.448"/>
<dbReference type="HOGENOM" id="CLU_028808_3_0_0"/>
<dbReference type="InParanoid" id="O84422"/>
<dbReference type="OrthoDB" id="9798540at2"/>
<dbReference type="Proteomes" id="UP000000431">
    <property type="component" value="Chromosome"/>
</dbReference>
<dbReference type="GO" id="GO:0043190">
    <property type="term" value="C:ATP-binding cassette (ABC) transporter complex"/>
    <property type="evidence" value="ECO:0007669"/>
    <property type="project" value="InterPro"/>
</dbReference>
<dbReference type="GO" id="GO:0005886">
    <property type="term" value="C:plasma membrane"/>
    <property type="evidence" value="ECO:0000318"/>
    <property type="project" value="GO_Central"/>
</dbReference>
<dbReference type="GO" id="GO:0010043">
    <property type="term" value="P:response to zinc ion"/>
    <property type="evidence" value="ECO:0000318"/>
    <property type="project" value="GO_Central"/>
</dbReference>
<dbReference type="GO" id="GO:0055085">
    <property type="term" value="P:transmembrane transport"/>
    <property type="evidence" value="ECO:0007669"/>
    <property type="project" value="InterPro"/>
</dbReference>
<dbReference type="CDD" id="cd06550">
    <property type="entry name" value="TM_ABC_iron-siderophores_like"/>
    <property type="match status" value="1"/>
</dbReference>
<dbReference type="Gene3D" id="1.10.3470.10">
    <property type="entry name" value="ABC transporter involved in vitamin B12 uptake, BtuC"/>
    <property type="match status" value="1"/>
</dbReference>
<dbReference type="InterPro" id="IPR037294">
    <property type="entry name" value="ABC_BtuC-like"/>
</dbReference>
<dbReference type="InterPro" id="IPR001626">
    <property type="entry name" value="ABC_TroCD"/>
</dbReference>
<dbReference type="PANTHER" id="PTHR30477">
    <property type="entry name" value="ABC-TRANSPORTER METAL-BINDING PROTEIN"/>
    <property type="match status" value="1"/>
</dbReference>
<dbReference type="PANTHER" id="PTHR30477:SF18">
    <property type="entry name" value="METAL TRANSPORT SYSTEM MEMBRANE PROTEIN CT_417-RELATED"/>
    <property type="match status" value="1"/>
</dbReference>
<dbReference type="Pfam" id="PF00950">
    <property type="entry name" value="ABC-3"/>
    <property type="match status" value="1"/>
</dbReference>
<dbReference type="SUPFAM" id="SSF81345">
    <property type="entry name" value="ABC transporter involved in vitamin B12 uptake, BtuC"/>
    <property type="match status" value="1"/>
</dbReference>
<protein>
    <recommendedName>
        <fullName>Probable metal transport system membrane protein CT_417</fullName>
    </recommendedName>
</protein>
<reference key="1">
    <citation type="journal article" date="1998" name="Science">
        <title>Genome sequence of an obligate intracellular pathogen of humans: Chlamydia trachomatis.</title>
        <authorList>
            <person name="Stephens R.S."/>
            <person name="Kalman S."/>
            <person name="Lammel C.J."/>
            <person name="Fan J."/>
            <person name="Marathe R."/>
            <person name="Aravind L."/>
            <person name="Mitchell W.P."/>
            <person name="Olinger L."/>
            <person name="Tatusov R.L."/>
            <person name="Zhao Q."/>
            <person name="Koonin E.V."/>
            <person name="Davis R.W."/>
        </authorList>
    </citation>
    <scope>NUCLEOTIDE SEQUENCE [LARGE SCALE GENOMIC DNA]</scope>
    <source>
        <strain>ATCC VR-885 / DSM 19411 / UW-3/Cx</strain>
    </source>
</reference>
<name>Y417_CHLTR</name>